<reference key="1">
    <citation type="journal article" date="1997" name="Nature">
        <title>The complete genome sequence of the hyperthermophilic, sulphate-reducing archaeon Archaeoglobus fulgidus.</title>
        <authorList>
            <person name="Klenk H.-P."/>
            <person name="Clayton R.A."/>
            <person name="Tomb J.-F."/>
            <person name="White O."/>
            <person name="Nelson K.E."/>
            <person name="Ketchum K.A."/>
            <person name="Dodson R.J."/>
            <person name="Gwinn M.L."/>
            <person name="Hickey E.K."/>
            <person name="Peterson J.D."/>
            <person name="Richardson D.L."/>
            <person name="Kerlavage A.R."/>
            <person name="Graham D.E."/>
            <person name="Kyrpides N.C."/>
            <person name="Fleischmann R.D."/>
            <person name="Quackenbush J."/>
            <person name="Lee N.H."/>
            <person name="Sutton G.G."/>
            <person name="Gill S.R."/>
            <person name="Kirkness E.F."/>
            <person name="Dougherty B.A."/>
            <person name="McKenney K."/>
            <person name="Adams M.D."/>
            <person name="Loftus B.J."/>
            <person name="Peterson S.N."/>
            <person name="Reich C.I."/>
            <person name="McNeil L.K."/>
            <person name="Badger J.H."/>
            <person name="Glodek A."/>
            <person name="Zhou L."/>
            <person name="Overbeek R."/>
            <person name="Gocayne J.D."/>
            <person name="Weidman J.F."/>
            <person name="McDonald L.A."/>
            <person name="Utterback T.R."/>
            <person name="Cotton M.D."/>
            <person name="Spriggs T."/>
            <person name="Artiach P."/>
            <person name="Kaine B.P."/>
            <person name="Sykes S.M."/>
            <person name="Sadow P.W."/>
            <person name="D'Andrea K.P."/>
            <person name="Bowman C."/>
            <person name="Fujii C."/>
            <person name="Garland S.A."/>
            <person name="Mason T.M."/>
            <person name="Olsen G.J."/>
            <person name="Fraser C.M."/>
            <person name="Smith H.O."/>
            <person name="Woese C.R."/>
            <person name="Venter J.C."/>
        </authorList>
    </citation>
    <scope>NUCLEOTIDE SEQUENCE [LARGE SCALE GENOMIC DNA]</scope>
    <source>
        <strain>ATCC 49558 / DSM 4304 / JCM 9628 / NBRC 100126 / VC-16</strain>
    </source>
</reference>
<keyword id="KW-0460">Magnesium</keyword>
<keyword id="KW-0479">Metal-binding</keyword>
<keyword id="KW-1185">Reference proteome</keyword>
<protein>
    <recommendedName>
        <fullName evidence="1">UPF0292 protein AF_0905</fullName>
    </recommendedName>
</protein>
<name>Y905_ARCFU</name>
<accession>O29357</accession>
<comment type="cofactor">
    <cofactor evidence="1">
        <name>Mg(2+)</name>
        <dbReference type="ChEBI" id="CHEBI:18420"/>
    </cofactor>
    <text evidence="1">Binds two Mg(2+) per subunit.</text>
</comment>
<comment type="similarity">
    <text evidence="1">Belongs to the UPF0292 family.</text>
</comment>
<organism>
    <name type="scientific">Archaeoglobus fulgidus (strain ATCC 49558 / DSM 4304 / JCM 9628 / NBRC 100126 / VC-16)</name>
    <dbReference type="NCBI Taxonomy" id="224325"/>
    <lineage>
        <taxon>Archaea</taxon>
        <taxon>Methanobacteriati</taxon>
        <taxon>Methanobacteriota</taxon>
        <taxon>Archaeoglobi</taxon>
        <taxon>Archaeoglobales</taxon>
        <taxon>Archaeoglobaceae</taxon>
        <taxon>Archaeoglobus</taxon>
    </lineage>
</organism>
<feature type="chain" id="PRO_0000143949" description="UPF0292 protein AF_0905">
    <location>
        <begin position="1"/>
        <end position="124"/>
    </location>
</feature>
<feature type="domain" description="Toprim" evidence="1">
    <location>
        <begin position="21"/>
        <end position="98"/>
    </location>
</feature>
<feature type="binding site" evidence="1">
    <location>
        <position position="27"/>
    </location>
    <ligand>
        <name>Mg(2+)</name>
        <dbReference type="ChEBI" id="CHEBI:18420"/>
        <label>1</label>
        <note>catalytic</note>
    </ligand>
</feature>
<feature type="binding site" evidence="1">
    <location>
        <position position="67"/>
    </location>
    <ligand>
        <name>Mg(2+)</name>
        <dbReference type="ChEBI" id="CHEBI:18420"/>
        <label>1</label>
        <note>catalytic</note>
    </ligand>
</feature>
<feature type="binding site" evidence="1">
    <location>
        <position position="67"/>
    </location>
    <ligand>
        <name>Mg(2+)</name>
        <dbReference type="ChEBI" id="CHEBI:18420"/>
        <label>2</label>
    </ligand>
</feature>
<feature type="binding site" evidence="1">
    <location>
        <position position="69"/>
    </location>
    <ligand>
        <name>Mg(2+)</name>
        <dbReference type="ChEBI" id="CHEBI:18420"/>
        <label>2</label>
    </ligand>
</feature>
<evidence type="ECO:0000255" key="1">
    <source>
        <dbReference type="HAMAP-Rule" id="MF_01095"/>
    </source>
</evidence>
<sequence length="124" mass="13948">MEDYKPFFEAIDELKEKSENGWVVVVEGKKDVRSLRAIGVSGEIVVFTGYASTADTLKDRKVIILTDSDAKGMEIEKGLVEALKTYGKIPDVEIKRKIFSNVRKEISKVEEISAFYEKISGIEL</sequence>
<proteinExistence type="inferred from homology"/>
<dbReference type="EMBL" id="AE000782">
    <property type="protein sequence ID" value="AAB90335.1"/>
    <property type="molecule type" value="Genomic_DNA"/>
</dbReference>
<dbReference type="PIR" id="A69363">
    <property type="entry name" value="A69363"/>
</dbReference>
<dbReference type="RefSeq" id="WP_010878405.1">
    <property type="nucleotide sequence ID" value="NC_000917.1"/>
</dbReference>
<dbReference type="SMR" id="O29357"/>
<dbReference type="STRING" id="224325.AF_0905"/>
<dbReference type="PaxDb" id="224325-AF_0905"/>
<dbReference type="EnsemblBacteria" id="AAB90335">
    <property type="protein sequence ID" value="AAB90335"/>
    <property type="gene ID" value="AF_0905"/>
</dbReference>
<dbReference type="KEGG" id="afu:AF_0905"/>
<dbReference type="eggNOG" id="arCOG01486">
    <property type="taxonomic scope" value="Archaea"/>
</dbReference>
<dbReference type="HOGENOM" id="CLU_140789_0_0_2"/>
<dbReference type="OrthoDB" id="56459at2157"/>
<dbReference type="PhylomeDB" id="O29357"/>
<dbReference type="Proteomes" id="UP000002199">
    <property type="component" value="Chromosome"/>
</dbReference>
<dbReference type="GO" id="GO:0046872">
    <property type="term" value="F:metal ion binding"/>
    <property type="evidence" value="ECO:0007669"/>
    <property type="project" value="UniProtKB-KW"/>
</dbReference>
<dbReference type="CDD" id="cd01027">
    <property type="entry name" value="TOPRIM_RNase_M5_like"/>
    <property type="match status" value="1"/>
</dbReference>
<dbReference type="Gene3D" id="3.40.1360.10">
    <property type="match status" value="1"/>
</dbReference>
<dbReference type="HAMAP" id="MF_01095">
    <property type="entry name" value="UPF0292"/>
    <property type="match status" value="1"/>
</dbReference>
<dbReference type="InterPro" id="IPR006171">
    <property type="entry name" value="TOPRIM_dom"/>
</dbReference>
<dbReference type="InterPro" id="IPR034141">
    <property type="entry name" value="TOPRIM_RNase_M5-like"/>
</dbReference>
<dbReference type="InterPro" id="IPR022972">
    <property type="entry name" value="UPF0292"/>
</dbReference>
<dbReference type="NCBIfam" id="NF003092">
    <property type="entry name" value="PRK04017.1-3"/>
    <property type="match status" value="1"/>
</dbReference>
<dbReference type="PANTHER" id="PTHR39964:SF2">
    <property type="entry name" value="UPF0292 PROTEIN MJ1624"/>
    <property type="match status" value="1"/>
</dbReference>
<dbReference type="PANTHER" id="PTHR39964">
    <property type="entry name" value="UPF0292 PROTEIN TK1411"/>
    <property type="match status" value="1"/>
</dbReference>
<dbReference type="Pfam" id="PF01751">
    <property type="entry name" value="Toprim"/>
    <property type="match status" value="1"/>
</dbReference>
<dbReference type="SMART" id="SM00493">
    <property type="entry name" value="TOPRIM"/>
    <property type="match status" value="1"/>
</dbReference>
<dbReference type="SUPFAM" id="SSF110455">
    <property type="entry name" value="Toprim domain"/>
    <property type="match status" value="1"/>
</dbReference>
<dbReference type="PROSITE" id="PS50880">
    <property type="entry name" value="TOPRIM"/>
    <property type="match status" value="1"/>
</dbReference>
<gene>
    <name type="ordered locus">AF_0905</name>
</gene>